<evidence type="ECO:0000256" key="1">
    <source>
        <dbReference type="SAM" id="MobiDB-lite"/>
    </source>
</evidence>
<evidence type="ECO:0000269" key="2">
    <source>
    </source>
</evidence>
<evidence type="ECO:0000269" key="3">
    <source>
    </source>
</evidence>
<evidence type="ECO:0000303" key="4">
    <source>
    </source>
</evidence>
<evidence type="ECO:0000305" key="5"/>
<evidence type="ECO:0000312" key="6">
    <source>
        <dbReference type="EMBL" id="AAQ96213.1"/>
    </source>
</evidence>
<evidence type="ECO:0000312" key="7">
    <source>
        <dbReference type="Proteomes" id="UP000001940"/>
    </source>
</evidence>
<evidence type="ECO:0000312" key="8">
    <source>
        <dbReference type="WormBase" id="K04G11.2"/>
    </source>
</evidence>
<keyword id="KW-0539">Nucleus</keyword>
<keyword id="KW-1185">Reference proteome</keyword>
<keyword id="KW-0804">Transcription</keyword>
<keyword id="KW-0805">Transcription regulation</keyword>
<comment type="function">
    <text evidence="2 3">Putative transcription factor (PubMed:19500563). Positive regulator of the lin-12/Notch signaling pathway (PubMed:15020414). Binds to specific DNA sequences in regulatory elements (PubMed:19500563). Involved in cell fate decisions that require cell-cell interactions, such as the anchor cell (AC) / ventral uterine (VU) precursor cell fate decision (PubMed:15020414). Heterochronic protein which controls the choice of stage specific cell fates, including the larval L3 stage-specific fate of seam cells (PubMed:19500563). Involved in regulating the temporal expression pattern of hunchback-like protein hbl-1, thereby playing a role in the progression between larval stages L2 and L3 (PubMed:19500563).</text>
</comment>
<comment type="subunit">
    <text evidence="2">Multimer (PubMed:15020414). May interact with mediator complex subunit mdt-29 (PubMed:15020414).</text>
</comment>
<comment type="subcellular location">
    <subcellularLocation>
        <location evidence="2">Nucleus</location>
    </subcellularLocation>
</comment>
<comment type="tissue specificity">
    <text evidence="3">Widely expressed, including in pharyngeal muscle cells and body wall muscle cells.</text>
</comment>
<comment type="developmental stage">
    <text evidence="2 3">Expressed in seam cells with temporal changes in expression level; undetectable in L1 and L2 larval stages, then expressed at the L3 stage, declining at the late L4 stage and expressed only weakly in young adults (PubMed:19500563). Expressed in the vulval precursor cells (VPCs) (PubMed:15020414).</text>
</comment>
<comment type="disruption phenotype">
    <text evidence="2">RNAi-mediated knockdown suppresses the hermaphrodite gonadal development and egg-laying defects in a lin-12 mutant background.</text>
</comment>
<organism evidence="7">
    <name type="scientific">Caenorhabditis elegans</name>
    <dbReference type="NCBI Taxonomy" id="6239"/>
    <lineage>
        <taxon>Eukaryota</taxon>
        <taxon>Metazoa</taxon>
        <taxon>Ecdysozoa</taxon>
        <taxon>Nematoda</taxon>
        <taxon>Chromadorea</taxon>
        <taxon>Rhabditida</taxon>
        <taxon>Rhabditina</taxon>
        <taxon>Rhabditomorpha</taxon>
        <taxon>Rhabditoidea</taxon>
        <taxon>Rhabditidae</taxon>
        <taxon>Peloderinae</taxon>
        <taxon>Caenorhabditis</taxon>
    </lineage>
</organism>
<protein>
    <recommendedName>
        <fullName evidence="4">Putative transcription factor sel-7</fullName>
    </recommendedName>
    <alternativeName>
        <fullName evidence="8">Suppressor/enhancer of lin-12 protein 7</fullName>
    </alternativeName>
</protein>
<reference evidence="6" key="1">
    <citation type="journal article" date="2004" name="Genetics">
        <title>sel-7, a positive regulator of lin-12 activity, encodes a novel nuclear protein in Caenorhabditis elegans.</title>
        <authorList>
            <person name="Chen J."/>
            <person name="Li X."/>
            <person name="Greenwald I."/>
        </authorList>
    </citation>
    <scope>NUCLEOTIDE SEQUENCE [MRNA]</scope>
    <scope>FUNCTION</scope>
    <scope>SUBUNIT</scope>
    <scope>INTERACTION WITH MDT-29</scope>
    <scope>SUBCELLULAR LOCATION</scope>
    <scope>DEVELOPMENTAL STAGE</scope>
    <scope>DISRUPTION PHENOTYPE</scope>
    <scope>MUTAGENESIS OF 55-ARG--ALA-324 AND 171-GLN--ALA-324</scope>
</reference>
<reference evidence="7" key="2">
    <citation type="journal article" date="1998" name="Science">
        <title>Genome sequence of the nematode C. elegans: a platform for investigating biology.</title>
        <authorList>
            <consortium name="The C. elegans sequencing consortium"/>
        </authorList>
    </citation>
    <scope>NUCLEOTIDE SEQUENCE [LARGE SCALE GENOMIC DNA]</scope>
    <source>
        <strain>Bristol N2</strain>
    </source>
</reference>
<reference evidence="5" key="3">
    <citation type="journal article" date="2009" name="Dev. Biol.">
        <title>The temporally regulated transcription factor sel-7 controls developmental timing in C. elegans.</title>
        <authorList>
            <person name="Xia D."/>
            <person name="Huang X."/>
            <person name="Zhang H."/>
        </authorList>
    </citation>
    <scope>FUNCTION</scope>
    <scope>TISSUE SPECIFICITY</scope>
    <scope>DEVELOPMENTAL STAGE</scope>
    <scope>MUTAGENESIS OF 171-GLN--ALA-324</scope>
</reference>
<proteinExistence type="evidence at protein level"/>
<name>SEL7_CAEEL</name>
<accession>G5EGS7</accession>
<dbReference type="EMBL" id="AY398504">
    <property type="protein sequence ID" value="AAQ96213.1"/>
    <property type="molecule type" value="mRNA"/>
</dbReference>
<dbReference type="EMBL" id="BX284606">
    <property type="protein sequence ID" value="CAB01759.2"/>
    <property type="molecule type" value="Genomic_DNA"/>
</dbReference>
<dbReference type="PIR" id="T23316">
    <property type="entry name" value="T23316"/>
</dbReference>
<dbReference type="RefSeq" id="NP_510392.2">
    <property type="nucleotide sequence ID" value="NM_077991.7"/>
</dbReference>
<dbReference type="FunCoup" id="G5EGS7">
    <property type="interactions" value="433"/>
</dbReference>
<dbReference type="STRING" id="6239.K04G11.2.1"/>
<dbReference type="PaxDb" id="6239-K04G11.2"/>
<dbReference type="EnsemblMetazoa" id="K04G11.2.1">
    <property type="protein sequence ID" value="K04G11.2.1"/>
    <property type="gene ID" value="WBGene00004764"/>
</dbReference>
<dbReference type="GeneID" id="181539"/>
<dbReference type="KEGG" id="cel:CELE_K04G11.2"/>
<dbReference type="AGR" id="WB:WBGene00004764"/>
<dbReference type="CTD" id="181539"/>
<dbReference type="WormBase" id="K04G11.2">
    <property type="protein sequence ID" value="CE35893"/>
    <property type="gene ID" value="WBGene00004764"/>
    <property type="gene designation" value="sel-7"/>
</dbReference>
<dbReference type="eggNOG" id="ENOG502SIQQ">
    <property type="taxonomic scope" value="Eukaryota"/>
</dbReference>
<dbReference type="HOGENOM" id="CLU_850682_0_0_1"/>
<dbReference type="InParanoid" id="G5EGS7"/>
<dbReference type="OMA" id="MSYFKWD"/>
<dbReference type="OrthoDB" id="5876852at2759"/>
<dbReference type="PRO" id="PR:G5EGS7"/>
<dbReference type="Proteomes" id="UP000001940">
    <property type="component" value="Chromosome X"/>
</dbReference>
<dbReference type="Bgee" id="WBGene00004764">
    <property type="expression patterns" value="Expressed in pharyngeal muscle cell (C elegans) and 3 other cell types or tissues"/>
</dbReference>
<dbReference type="GO" id="GO:0005634">
    <property type="term" value="C:nucleus"/>
    <property type="evidence" value="ECO:0000314"/>
    <property type="project" value="WormBase"/>
</dbReference>
<dbReference type="GO" id="GO:0042802">
    <property type="term" value="F:identical protein binding"/>
    <property type="evidence" value="ECO:0000353"/>
    <property type="project" value="WormBase"/>
</dbReference>
<dbReference type="GO" id="GO:0043565">
    <property type="term" value="F:sequence-specific DNA binding"/>
    <property type="evidence" value="ECO:0000314"/>
    <property type="project" value="WormBase"/>
</dbReference>
<dbReference type="GO" id="GO:0046331">
    <property type="term" value="P:lateral inhibition"/>
    <property type="evidence" value="ECO:0000316"/>
    <property type="project" value="WormBase"/>
</dbReference>
<dbReference type="GO" id="GO:0000122">
    <property type="term" value="P:negative regulation of transcription by RNA polymerase II"/>
    <property type="evidence" value="ECO:0000315"/>
    <property type="project" value="WormBase"/>
</dbReference>
<dbReference type="GO" id="GO:0045747">
    <property type="term" value="P:positive regulation of Notch signaling pathway"/>
    <property type="evidence" value="ECO:0000316"/>
    <property type="project" value="WormBase"/>
</dbReference>
<dbReference type="GO" id="GO:0042659">
    <property type="term" value="P:regulation of cell fate specification"/>
    <property type="evidence" value="ECO:0000316"/>
    <property type="project" value="WormBase"/>
</dbReference>
<dbReference type="GO" id="GO:0040034">
    <property type="term" value="P:regulation of development, heterochronic"/>
    <property type="evidence" value="ECO:0000315"/>
    <property type="project" value="WormBase"/>
</dbReference>
<dbReference type="GO" id="GO:0042661">
    <property type="term" value="P:regulation of mesodermal cell fate specification"/>
    <property type="evidence" value="ECO:0000316"/>
    <property type="project" value="WormBase"/>
</dbReference>
<feature type="chain" id="PRO_0000456143" description="Putative transcription factor sel-7">
    <location>
        <begin position="1"/>
        <end position="324"/>
    </location>
</feature>
<feature type="region of interest" description="Disordered" evidence="1">
    <location>
        <begin position="67"/>
        <end position="151"/>
    </location>
</feature>
<feature type="compositionally biased region" description="Polar residues" evidence="1">
    <location>
        <begin position="67"/>
        <end position="85"/>
    </location>
</feature>
<feature type="compositionally biased region" description="Low complexity" evidence="1">
    <location>
        <begin position="86"/>
        <end position="98"/>
    </location>
</feature>
<feature type="compositionally biased region" description="Acidic residues" evidence="1">
    <location>
        <begin position="106"/>
        <end position="123"/>
    </location>
</feature>
<feature type="compositionally biased region" description="Polar residues" evidence="1">
    <location>
        <begin position="124"/>
        <end position="133"/>
    </location>
</feature>
<feature type="compositionally biased region" description="Basic and acidic residues" evidence="1">
    <location>
        <begin position="134"/>
        <end position="146"/>
    </location>
</feature>
<feature type="mutagenesis site" description="In ar523; suppresses the hermaphrodite gonadal development defect in a lin-12 mutant background." evidence="2">
    <location>
        <begin position="55"/>
        <end position="324"/>
    </location>
</feature>
<feature type="mutagenesis site" description="In n1253; suppresses the hermaphrodite gonadal development and egg-laying defects in a lin-12 mutant background. Defects in larval stage-specific division of seam cells, leading to reiteration of the typical L2 divisions at the L3 stage; phenotype exacerbated in various mutant backgrounds, e.g. in combination with lin-46, or dcr-1 or let-7. Defect in the development and division of distal tip cells (DTCs), located at the tip of each gonad arm. Abnormal timing of expression of hunchback-like protein hbl-1 at the larval L3 stage." evidence="2 3">
    <location>
        <begin position="171"/>
        <end position="324"/>
    </location>
</feature>
<sequence>MAQPNQPTPQFQMAQIPLAAFFDNNESKTMLNSMNLRLNDMDLKLSLILELLATRLPDQRLPSIFTSPPQTVISEAPPQSFTPSATNSTSDKTSSSLKTELKTEDSDGDLDMEGEEDTEELFDNESQPSQRNQSPKETEVEDEKVLADGPFPEGAVKRAAEKAARSFQSTQPKVFAWQILRESVTDDELRNVQISLRTFHGETADHLLGRQLPKIRLVVEATMKYFKWDLLSTESQLSKAKLILSHLKNNAKVRNWTLREGRPNRVAPATPPVNVDLVWKRYLALLGPAGFTGILPNLPQNLCNGGTQSPSIPQIDPSLFKVDA</sequence>
<gene>
    <name evidence="8" type="primary">sel-7</name>
    <name evidence="8" type="ORF">K04G11.2</name>
</gene>